<protein>
    <recommendedName>
        <fullName evidence="3">Small ribosomal subunit protein mS23</fullName>
    </recommendedName>
    <alternativeName>
        <fullName>37S ribosomal protein S25, mitochondrial</fullName>
    </alternativeName>
</protein>
<dbReference type="EMBL" id="DS480418">
    <property type="protein sequence ID" value="EDO16735.1"/>
    <property type="molecule type" value="Genomic_DNA"/>
</dbReference>
<dbReference type="RefSeq" id="XP_001644593.1">
    <property type="nucleotide sequence ID" value="XM_001644543.1"/>
</dbReference>
<dbReference type="SMR" id="A7TLZ8"/>
<dbReference type="FunCoup" id="A7TLZ8">
    <property type="interactions" value="175"/>
</dbReference>
<dbReference type="STRING" id="436907.A7TLZ8"/>
<dbReference type="GeneID" id="5544901"/>
<dbReference type="KEGG" id="vpo:Kpol_1003p40"/>
<dbReference type="eggNOG" id="ENOG502RZQQ">
    <property type="taxonomic scope" value="Eukaryota"/>
</dbReference>
<dbReference type="HOGENOM" id="CLU_081350_0_0_1"/>
<dbReference type="InParanoid" id="A7TLZ8"/>
<dbReference type="OMA" id="ENWKIWA"/>
<dbReference type="OrthoDB" id="5542239at2759"/>
<dbReference type="PhylomeDB" id="A7TLZ8"/>
<dbReference type="Proteomes" id="UP000000267">
    <property type="component" value="Unassembled WGS sequence"/>
</dbReference>
<dbReference type="GO" id="GO:0005763">
    <property type="term" value="C:mitochondrial small ribosomal subunit"/>
    <property type="evidence" value="ECO:0007669"/>
    <property type="project" value="EnsemblFungi"/>
</dbReference>
<dbReference type="GO" id="GO:0003735">
    <property type="term" value="F:structural constituent of ribosome"/>
    <property type="evidence" value="ECO:0007669"/>
    <property type="project" value="EnsemblFungi"/>
</dbReference>
<dbReference type="InterPro" id="IPR016939">
    <property type="entry name" value="Ribosomal_mS23_fun"/>
</dbReference>
<dbReference type="PANTHER" id="PTHR37799">
    <property type="entry name" value="37S RIBOSOMAL PROTEIN S25, MITOCHONDRIAL"/>
    <property type="match status" value="1"/>
</dbReference>
<dbReference type="PANTHER" id="PTHR37799:SF1">
    <property type="entry name" value="SMALL RIBOSOMAL SUBUNIT PROTEIN MS23"/>
    <property type="match status" value="1"/>
</dbReference>
<dbReference type="Pfam" id="PF13741">
    <property type="entry name" value="MRP-S25"/>
    <property type="match status" value="1"/>
</dbReference>
<dbReference type="PIRSF" id="PIRSF029764">
    <property type="entry name" value="RSM25"/>
    <property type="match status" value="1"/>
</dbReference>
<accession>A7TLZ8</accession>
<comment type="subunit">
    <text evidence="1">Component of the mitochondrial small ribosomal subunit.</text>
</comment>
<comment type="subcellular location">
    <subcellularLocation>
        <location evidence="1">Mitochondrion</location>
    </subcellularLocation>
</comment>
<comment type="similarity">
    <text evidence="3">Belongs to the mitochondrion-specific ribosomal protein mS23 family.</text>
</comment>
<reference key="1">
    <citation type="journal article" date="2007" name="Proc. Natl. Acad. Sci. U.S.A.">
        <title>Independent sorting-out of thousands of duplicated gene pairs in two yeast species descended from a whole-genome duplication.</title>
        <authorList>
            <person name="Scannell D.R."/>
            <person name="Frank A.C."/>
            <person name="Conant G.C."/>
            <person name="Byrne K.P."/>
            <person name="Woolfit M."/>
            <person name="Wolfe K.H."/>
        </authorList>
    </citation>
    <scope>NUCLEOTIDE SEQUENCE [LARGE SCALE GENOMIC DNA]</scope>
    <source>
        <strain>ATCC 22028 / DSM 70294 / BCRC 21397 / CBS 2163 / NBRC 10782 / NRRL Y-8283 / UCD 57-17</strain>
    </source>
</reference>
<evidence type="ECO:0000250" key="1"/>
<evidence type="ECO:0000256" key="2">
    <source>
        <dbReference type="SAM" id="MobiDB-lite"/>
    </source>
</evidence>
<evidence type="ECO:0000305" key="3"/>
<organism>
    <name type="scientific">Vanderwaltozyma polyspora (strain ATCC 22028 / DSM 70294 / BCRC 21397 / CBS 2163 / NBRC 10782 / NRRL Y-8283 / UCD 57-17)</name>
    <name type="common">Kluyveromyces polysporus</name>
    <dbReference type="NCBI Taxonomy" id="436907"/>
    <lineage>
        <taxon>Eukaryota</taxon>
        <taxon>Fungi</taxon>
        <taxon>Dikarya</taxon>
        <taxon>Ascomycota</taxon>
        <taxon>Saccharomycotina</taxon>
        <taxon>Saccharomycetes</taxon>
        <taxon>Saccharomycetales</taxon>
        <taxon>Saccharomycetaceae</taxon>
        <taxon>Vanderwaltozyma</taxon>
    </lineage>
</organism>
<feature type="chain" id="PRO_0000343562" description="Small ribosomal subunit protein mS23">
    <location>
        <begin position="1"/>
        <end position="261"/>
    </location>
</feature>
<feature type="region of interest" description="Disordered" evidence="2">
    <location>
        <begin position="234"/>
        <end position="261"/>
    </location>
</feature>
<feature type="compositionally biased region" description="Basic and acidic residues" evidence="2">
    <location>
        <begin position="241"/>
        <end position="250"/>
    </location>
</feature>
<feature type="compositionally biased region" description="Acidic residues" evidence="2">
    <location>
        <begin position="251"/>
        <end position="261"/>
    </location>
</feature>
<name>RT25_VANPO</name>
<proteinExistence type="inferred from homology"/>
<gene>
    <name type="primary">RSM25</name>
    <name type="ORF">Kpol_1003p40</name>
</gene>
<sequence>MKIQKNAVNVLERTSAYLRAGLLTKQPAWYNVVASVPPLKKFERVPKLTNPSNDRINGQLHSLDSSAGNNGMFKTRYTAKDRSNASKQLYSASKLTYIEDQLREIFYKQHPWELSRPKILIENNGDEKYDWSHMQQIGKPLDGESVVQRTLYLMKNKEAPSLVLAYDMARYEFYRLRMQQHIEEQVAQEEAEMFGSVFGPSAIEYGIQKEQKVIDTWKRKAIIQTEIMAARRINPSESWATDEKDPKKNDDIEEDVEEIKL</sequence>
<keyword id="KW-0496">Mitochondrion</keyword>
<keyword id="KW-1185">Reference proteome</keyword>
<keyword id="KW-0687">Ribonucleoprotein</keyword>
<keyword id="KW-0689">Ribosomal protein</keyword>